<keyword id="KW-1185">Reference proteome</keyword>
<keyword id="KW-0687">Ribonucleoprotein</keyword>
<keyword id="KW-0689">Ribosomal protein</keyword>
<keyword id="KW-0694">RNA-binding</keyword>
<keyword id="KW-0699">rRNA-binding</keyword>
<keyword id="KW-0820">tRNA-binding</keyword>
<name>RS13_WIGBR</name>
<organism>
    <name type="scientific">Wigglesworthia glossinidia brevipalpis</name>
    <dbReference type="NCBI Taxonomy" id="36870"/>
    <lineage>
        <taxon>Bacteria</taxon>
        <taxon>Pseudomonadati</taxon>
        <taxon>Pseudomonadota</taxon>
        <taxon>Gammaproteobacteria</taxon>
        <taxon>Enterobacterales</taxon>
        <taxon>Erwiniaceae</taxon>
        <taxon>Wigglesworthia</taxon>
    </lineage>
</organism>
<feature type="chain" id="PRO_0000132170" description="Small ribosomal subunit protein uS13">
    <location>
        <begin position="1"/>
        <end position="118"/>
    </location>
</feature>
<feature type="region of interest" description="Disordered" evidence="2">
    <location>
        <begin position="92"/>
        <end position="118"/>
    </location>
</feature>
<gene>
    <name evidence="1" type="primary">rpsM</name>
    <name type="ordered locus">WIGBR5650</name>
</gene>
<accession>Q8D1Z0</accession>
<dbReference type="EMBL" id="BA000021">
    <property type="protein sequence ID" value="BAC24711.1"/>
    <property type="molecule type" value="Genomic_DNA"/>
</dbReference>
<dbReference type="SMR" id="Q8D1Z0"/>
<dbReference type="STRING" id="36870.gene:10369074"/>
<dbReference type="KEGG" id="wbr:rpsM"/>
<dbReference type="eggNOG" id="COG0099">
    <property type="taxonomic scope" value="Bacteria"/>
</dbReference>
<dbReference type="HOGENOM" id="CLU_103849_1_2_6"/>
<dbReference type="OrthoDB" id="9803610at2"/>
<dbReference type="Proteomes" id="UP000000562">
    <property type="component" value="Chromosome"/>
</dbReference>
<dbReference type="GO" id="GO:0005829">
    <property type="term" value="C:cytosol"/>
    <property type="evidence" value="ECO:0007669"/>
    <property type="project" value="TreeGrafter"/>
</dbReference>
<dbReference type="GO" id="GO:0015935">
    <property type="term" value="C:small ribosomal subunit"/>
    <property type="evidence" value="ECO:0007669"/>
    <property type="project" value="TreeGrafter"/>
</dbReference>
<dbReference type="GO" id="GO:0019843">
    <property type="term" value="F:rRNA binding"/>
    <property type="evidence" value="ECO:0007669"/>
    <property type="project" value="UniProtKB-UniRule"/>
</dbReference>
<dbReference type="GO" id="GO:0003735">
    <property type="term" value="F:structural constituent of ribosome"/>
    <property type="evidence" value="ECO:0007669"/>
    <property type="project" value="InterPro"/>
</dbReference>
<dbReference type="GO" id="GO:0000049">
    <property type="term" value="F:tRNA binding"/>
    <property type="evidence" value="ECO:0007669"/>
    <property type="project" value="UniProtKB-UniRule"/>
</dbReference>
<dbReference type="GO" id="GO:0006412">
    <property type="term" value="P:translation"/>
    <property type="evidence" value="ECO:0007669"/>
    <property type="project" value="UniProtKB-UniRule"/>
</dbReference>
<dbReference type="FunFam" id="1.10.8.50:FF:000001">
    <property type="entry name" value="30S ribosomal protein S13"/>
    <property type="match status" value="1"/>
</dbReference>
<dbReference type="FunFam" id="4.10.910.10:FF:000001">
    <property type="entry name" value="30S ribosomal protein S13"/>
    <property type="match status" value="1"/>
</dbReference>
<dbReference type="Gene3D" id="1.10.8.50">
    <property type="match status" value="1"/>
</dbReference>
<dbReference type="Gene3D" id="4.10.910.10">
    <property type="entry name" value="30s ribosomal protein s13, domain 2"/>
    <property type="match status" value="1"/>
</dbReference>
<dbReference type="HAMAP" id="MF_01315">
    <property type="entry name" value="Ribosomal_uS13"/>
    <property type="match status" value="1"/>
</dbReference>
<dbReference type="InterPro" id="IPR027437">
    <property type="entry name" value="Rbsml_uS13_C"/>
</dbReference>
<dbReference type="InterPro" id="IPR001892">
    <property type="entry name" value="Ribosomal_uS13"/>
</dbReference>
<dbReference type="InterPro" id="IPR010979">
    <property type="entry name" value="Ribosomal_uS13-like_H2TH"/>
</dbReference>
<dbReference type="InterPro" id="IPR019980">
    <property type="entry name" value="Ribosomal_uS13_bac-type"/>
</dbReference>
<dbReference type="InterPro" id="IPR018269">
    <property type="entry name" value="Ribosomal_uS13_CS"/>
</dbReference>
<dbReference type="NCBIfam" id="TIGR03631">
    <property type="entry name" value="uS13_bact"/>
    <property type="match status" value="1"/>
</dbReference>
<dbReference type="PANTHER" id="PTHR10871">
    <property type="entry name" value="30S RIBOSOMAL PROTEIN S13/40S RIBOSOMAL PROTEIN S18"/>
    <property type="match status" value="1"/>
</dbReference>
<dbReference type="PANTHER" id="PTHR10871:SF1">
    <property type="entry name" value="SMALL RIBOSOMAL SUBUNIT PROTEIN US13M"/>
    <property type="match status" value="1"/>
</dbReference>
<dbReference type="Pfam" id="PF00416">
    <property type="entry name" value="Ribosomal_S13"/>
    <property type="match status" value="1"/>
</dbReference>
<dbReference type="PIRSF" id="PIRSF002134">
    <property type="entry name" value="Ribosomal_S13"/>
    <property type="match status" value="1"/>
</dbReference>
<dbReference type="SUPFAM" id="SSF46946">
    <property type="entry name" value="S13-like H2TH domain"/>
    <property type="match status" value="1"/>
</dbReference>
<dbReference type="PROSITE" id="PS00646">
    <property type="entry name" value="RIBOSOMAL_S13_1"/>
    <property type="match status" value="1"/>
</dbReference>
<dbReference type="PROSITE" id="PS50159">
    <property type="entry name" value="RIBOSOMAL_S13_2"/>
    <property type="match status" value="1"/>
</dbReference>
<protein>
    <recommendedName>
        <fullName evidence="1">Small ribosomal subunit protein uS13</fullName>
    </recommendedName>
    <alternativeName>
        <fullName evidence="3">30S ribosomal protein S13</fullName>
    </alternativeName>
</protein>
<reference key="1">
    <citation type="journal article" date="2002" name="Nat. Genet.">
        <title>Genome sequence of the endocellular obligate symbiont of tsetse flies, Wigglesworthia glossinidia.</title>
        <authorList>
            <person name="Akman L."/>
            <person name="Yamashita A."/>
            <person name="Watanabe H."/>
            <person name="Oshima K."/>
            <person name="Shiba T."/>
            <person name="Hattori M."/>
            <person name="Aksoy S."/>
        </authorList>
    </citation>
    <scope>NUCLEOTIDE SEQUENCE [LARGE SCALE GENOMIC DNA]</scope>
</reference>
<sequence length="118" mass="13560">MTRIAGVNIPEKKHIVIALKKIYGIGNVLARKICKKTGINFSKKVNSLDSSEIELIRNEVLKLKIEGDLRREMTLNIKRLIDLGTYRGLRHKKHLPVRGQRTKTNARTRKGPRKPIKK</sequence>
<comment type="function">
    <text evidence="1">Located at the top of the head of the 30S subunit, it contacts several helices of the 16S rRNA. In the 70S ribosome it contacts the 23S rRNA (bridge B1a) and protein L5 of the 50S subunit (bridge B1b), connecting the 2 subunits; these bridges are implicated in subunit movement. Contacts the tRNAs in the A and P-sites.</text>
</comment>
<comment type="subunit">
    <text evidence="1">Part of the 30S ribosomal subunit. Forms a loose heterodimer with protein S19. Forms two bridges to the 50S subunit in the 70S ribosome.</text>
</comment>
<comment type="similarity">
    <text evidence="1">Belongs to the universal ribosomal protein uS13 family.</text>
</comment>
<proteinExistence type="inferred from homology"/>
<evidence type="ECO:0000255" key="1">
    <source>
        <dbReference type="HAMAP-Rule" id="MF_01315"/>
    </source>
</evidence>
<evidence type="ECO:0000256" key="2">
    <source>
        <dbReference type="SAM" id="MobiDB-lite"/>
    </source>
</evidence>
<evidence type="ECO:0000305" key="3"/>